<evidence type="ECO:0000255" key="1">
    <source>
        <dbReference type="PROSITE-ProRule" id="PRU01266"/>
    </source>
</evidence>
<organism>
    <name type="scientific">Methanocaldococcus jannaschii (strain ATCC 43067 / DSM 2661 / JAL-1 / JCM 10045 / NBRC 100440)</name>
    <name type="common">Methanococcus jannaschii</name>
    <dbReference type="NCBI Taxonomy" id="243232"/>
    <lineage>
        <taxon>Archaea</taxon>
        <taxon>Methanobacteriati</taxon>
        <taxon>Methanobacteriota</taxon>
        <taxon>Methanomada group</taxon>
        <taxon>Methanococci</taxon>
        <taxon>Methanococcales</taxon>
        <taxon>Methanocaldococcaceae</taxon>
        <taxon>Methanocaldococcus</taxon>
    </lineage>
</organism>
<keyword id="KW-0004">4Fe-4S</keyword>
<keyword id="KW-0408">Iron</keyword>
<keyword id="KW-0411">Iron-sulfur</keyword>
<keyword id="KW-0479">Metal-binding</keyword>
<keyword id="KW-1185">Reference proteome</keyword>
<keyword id="KW-0949">S-adenosyl-L-methionine</keyword>
<comment type="cofactor">
    <cofactor evidence="1">
        <name>[4Fe-4S] cluster</name>
        <dbReference type="ChEBI" id="CHEBI:49883"/>
    </cofactor>
</comment>
<proteinExistence type="predicted"/>
<gene>
    <name type="ordered locus">MJ0785</name>
</gene>
<accession>Q58195</accession>
<protein>
    <recommendedName>
        <fullName>Uncharacterized protein MJ0785</fullName>
    </recommendedName>
</protein>
<feature type="chain" id="PRO_0000185568" description="Uncharacterized protein MJ0785">
    <location>
        <begin position="1"/>
        <end position="375"/>
    </location>
</feature>
<feature type="domain" description="Radical SAM core" evidence="1">
    <location>
        <begin position="78"/>
        <end position="302"/>
    </location>
</feature>
<feature type="binding site" evidence="1">
    <location>
        <position position="92"/>
    </location>
    <ligand>
        <name>[4Fe-4S] cluster</name>
        <dbReference type="ChEBI" id="CHEBI:49883"/>
        <note>4Fe-4S-S-AdoMet</note>
    </ligand>
</feature>
<feature type="binding site" evidence="1">
    <location>
        <position position="98"/>
    </location>
    <ligand>
        <name>[4Fe-4S] cluster</name>
        <dbReference type="ChEBI" id="CHEBI:49883"/>
        <note>4Fe-4S-S-AdoMet</note>
    </ligand>
</feature>
<feature type="binding site" evidence="1">
    <location>
        <position position="101"/>
    </location>
    <ligand>
        <name>[4Fe-4S] cluster</name>
        <dbReference type="ChEBI" id="CHEBI:49883"/>
        <note>4Fe-4S-S-AdoMet</note>
    </ligand>
</feature>
<name>Y785_METJA</name>
<sequence>MKYTYKISKVKISGDLMVFGKIEEEFKEFLESRRKYNEFIKNGLIDEDEALKLFKIDNWRDYLKLFDIASRVRDYFKKKIEITSTIHITNICHVNPKCLYCGFAAGTSKEGYYEPFRLTDEEIKKSAIAIEESGIKRVSCSSAHGYQGKEVIRALKIVKKYTNLEVLVNAGADLTEESIKELKKYGIDTICCNLETINENLFKKVKPGEELEDRIRVCKLVNKYDIELSTGLLIGIGESYEDRVEHLFYLKNELNVGEIPIMGFNPYKGTPMENHPKCSALEQAKTIAITRLIFPNIRITSPTPTIGAELVQFALFGGASNVATVIPKNHPMNVKGVGNPKTGNLEEVVKMIMDLGLKPKLDWRRYENYLKIYGK</sequence>
<reference key="1">
    <citation type="journal article" date="1996" name="Science">
        <title>Complete genome sequence of the methanogenic archaeon, Methanococcus jannaschii.</title>
        <authorList>
            <person name="Bult C.J."/>
            <person name="White O."/>
            <person name="Olsen G.J."/>
            <person name="Zhou L."/>
            <person name="Fleischmann R.D."/>
            <person name="Sutton G.G."/>
            <person name="Blake J.A."/>
            <person name="FitzGerald L.M."/>
            <person name="Clayton R.A."/>
            <person name="Gocayne J.D."/>
            <person name="Kerlavage A.R."/>
            <person name="Dougherty B.A."/>
            <person name="Tomb J.-F."/>
            <person name="Adams M.D."/>
            <person name="Reich C.I."/>
            <person name="Overbeek R."/>
            <person name="Kirkness E.F."/>
            <person name="Weinstock K.G."/>
            <person name="Merrick J.M."/>
            <person name="Glodek A."/>
            <person name="Scott J.L."/>
            <person name="Geoghagen N.S.M."/>
            <person name="Weidman J.F."/>
            <person name="Fuhrmann J.L."/>
            <person name="Nguyen D."/>
            <person name="Utterback T.R."/>
            <person name="Kelley J.M."/>
            <person name="Peterson J.D."/>
            <person name="Sadow P.W."/>
            <person name="Hanna M.C."/>
            <person name="Cotton M.D."/>
            <person name="Roberts K.M."/>
            <person name="Hurst M.A."/>
            <person name="Kaine B.P."/>
            <person name="Borodovsky M."/>
            <person name="Klenk H.-P."/>
            <person name="Fraser C.M."/>
            <person name="Smith H.O."/>
            <person name="Woese C.R."/>
            <person name="Venter J.C."/>
        </authorList>
    </citation>
    <scope>NUCLEOTIDE SEQUENCE [LARGE SCALE GENOMIC DNA]</scope>
    <source>
        <strain>ATCC 43067 / DSM 2661 / JAL-1 / JCM 10045 / NBRC 100440</strain>
    </source>
</reference>
<dbReference type="EMBL" id="L77117">
    <property type="protein sequence ID" value="AAB98782.1"/>
    <property type="molecule type" value="Genomic_DNA"/>
</dbReference>
<dbReference type="PIR" id="A64398">
    <property type="entry name" value="A64398"/>
</dbReference>
<dbReference type="SMR" id="Q58195"/>
<dbReference type="FunCoup" id="Q58195">
    <property type="interactions" value="109"/>
</dbReference>
<dbReference type="STRING" id="243232.MJ_0785"/>
<dbReference type="PaxDb" id="243232-MJ_0785"/>
<dbReference type="EnsemblBacteria" id="AAB98782">
    <property type="protein sequence ID" value="AAB98782"/>
    <property type="gene ID" value="MJ_0785"/>
</dbReference>
<dbReference type="KEGG" id="mja:MJ_0785"/>
<dbReference type="eggNOG" id="arCOG00658">
    <property type="taxonomic scope" value="Archaea"/>
</dbReference>
<dbReference type="HOGENOM" id="CLU_033172_0_0_2"/>
<dbReference type="InParanoid" id="Q58195"/>
<dbReference type="PhylomeDB" id="Q58195"/>
<dbReference type="Proteomes" id="UP000000805">
    <property type="component" value="Chromosome"/>
</dbReference>
<dbReference type="GO" id="GO:0051537">
    <property type="term" value="F:2 iron, 2 sulfur cluster binding"/>
    <property type="evidence" value="ECO:0000318"/>
    <property type="project" value="GO_Central"/>
</dbReference>
<dbReference type="GO" id="GO:0051539">
    <property type="term" value="F:4 iron, 4 sulfur cluster binding"/>
    <property type="evidence" value="ECO:0007669"/>
    <property type="project" value="UniProtKB-KW"/>
</dbReference>
<dbReference type="GO" id="GO:0004076">
    <property type="term" value="F:biotin synthase activity"/>
    <property type="evidence" value="ECO:0000318"/>
    <property type="project" value="GO_Central"/>
</dbReference>
<dbReference type="GO" id="GO:0046872">
    <property type="term" value="F:metal ion binding"/>
    <property type="evidence" value="ECO:0007669"/>
    <property type="project" value="UniProtKB-KW"/>
</dbReference>
<dbReference type="GO" id="GO:0009102">
    <property type="term" value="P:biotin biosynthetic process"/>
    <property type="evidence" value="ECO:0000318"/>
    <property type="project" value="GO_Central"/>
</dbReference>
<dbReference type="CDD" id="cd01335">
    <property type="entry name" value="Radical_SAM"/>
    <property type="match status" value="1"/>
</dbReference>
<dbReference type="Gene3D" id="3.20.20.70">
    <property type="entry name" value="Aldolase class I"/>
    <property type="match status" value="1"/>
</dbReference>
<dbReference type="InterPro" id="IPR013785">
    <property type="entry name" value="Aldolase_TIM"/>
</dbReference>
<dbReference type="InterPro" id="IPR010722">
    <property type="entry name" value="BATS_dom"/>
</dbReference>
<dbReference type="InterPro" id="IPR002684">
    <property type="entry name" value="Biotin_synth/BioAB"/>
</dbReference>
<dbReference type="InterPro" id="IPR006638">
    <property type="entry name" value="Elp3/MiaA/NifB-like_rSAM"/>
</dbReference>
<dbReference type="InterPro" id="IPR023858">
    <property type="entry name" value="HcgA-like"/>
</dbReference>
<dbReference type="InterPro" id="IPR007197">
    <property type="entry name" value="rSAM"/>
</dbReference>
<dbReference type="NCBIfam" id="TIGR03957">
    <property type="entry name" value="rSAM_HmdB"/>
    <property type="match status" value="1"/>
</dbReference>
<dbReference type="PANTHER" id="PTHR22976">
    <property type="entry name" value="BIOTIN SYNTHASE"/>
    <property type="match status" value="1"/>
</dbReference>
<dbReference type="PANTHER" id="PTHR22976:SF2">
    <property type="entry name" value="BIOTIN SYNTHASE, MITOCHONDRIAL"/>
    <property type="match status" value="1"/>
</dbReference>
<dbReference type="Pfam" id="PF06968">
    <property type="entry name" value="BATS"/>
    <property type="match status" value="1"/>
</dbReference>
<dbReference type="Pfam" id="PF04055">
    <property type="entry name" value="Radical_SAM"/>
    <property type="match status" value="1"/>
</dbReference>
<dbReference type="SFLD" id="SFLDG01082">
    <property type="entry name" value="B12-binding_domain_containing"/>
    <property type="match status" value="1"/>
</dbReference>
<dbReference type="SFLD" id="SFLDG01060">
    <property type="entry name" value="BATS_domain_containing"/>
    <property type="match status" value="1"/>
</dbReference>
<dbReference type="SFLD" id="SFLDF00330">
    <property type="entry name" value="HMD_cofactor_maturase_(HmdB-li"/>
    <property type="match status" value="1"/>
</dbReference>
<dbReference type="SFLD" id="SFLDS00029">
    <property type="entry name" value="Radical_SAM"/>
    <property type="match status" value="1"/>
</dbReference>
<dbReference type="SMART" id="SM00876">
    <property type="entry name" value="BATS"/>
    <property type="match status" value="1"/>
</dbReference>
<dbReference type="SMART" id="SM00729">
    <property type="entry name" value="Elp3"/>
    <property type="match status" value="1"/>
</dbReference>
<dbReference type="SUPFAM" id="SSF102114">
    <property type="entry name" value="Radical SAM enzymes"/>
    <property type="match status" value="1"/>
</dbReference>
<dbReference type="PROSITE" id="PS51918">
    <property type="entry name" value="RADICAL_SAM"/>
    <property type="match status" value="1"/>
</dbReference>